<proteinExistence type="inferred from homology"/>
<dbReference type="EC" id="5.3.1.5" evidence="1"/>
<dbReference type="EMBL" id="BX950851">
    <property type="protein sequence ID" value="CAG73017.1"/>
    <property type="molecule type" value="Genomic_DNA"/>
</dbReference>
<dbReference type="RefSeq" id="WP_011091740.1">
    <property type="nucleotide sequence ID" value="NC_004547.2"/>
</dbReference>
<dbReference type="SMR" id="Q6DB05"/>
<dbReference type="STRING" id="218491.ECA0097"/>
<dbReference type="GeneID" id="57206953"/>
<dbReference type="KEGG" id="eca:ECA0097"/>
<dbReference type="PATRIC" id="fig|218491.5.peg.99"/>
<dbReference type="eggNOG" id="COG2115">
    <property type="taxonomic scope" value="Bacteria"/>
</dbReference>
<dbReference type="HOGENOM" id="CLU_037261_1_0_6"/>
<dbReference type="OrthoDB" id="9763981at2"/>
<dbReference type="Proteomes" id="UP000007966">
    <property type="component" value="Chromosome"/>
</dbReference>
<dbReference type="GO" id="GO:0005737">
    <property type="term" value="C:cytoplasm"/>
    <property type="evidence" value="ECO:0007669"/>
    <property type="project" value="UniProtKB-SubCell"/>
</dbReference>
<dbReference type="GO" id="GO:0000287">
    <property type="term" value="F:magnesium ion binding"/>
    <property type="evidence" value="ECO:0007669"/>
    <property type="project" value="UniProtKB-UniRule"/>
</dbReference>
<dbReference type="GO" id="GO:0009045">
    <property type="term" value="F:xylose isomerase activity"/>
    <property type="evidence" value="ECO:0007669"/>
    <property type="project" value="UniProtKB-UniRule"/>
</dbReference>
<dbReference type="GO" id="GO:0042732">
    <property type="term" value="P:D-xylose metabolic process"/>
    <property type="evidence" value="ECO:0007669"/>
    <property type="project" value="UniProtKB-UniRule"/>
</dbReference>
<dbReference type="FunFam" id="3.20.20.150:FF:000002">
    <property type="entry name" value="Xylose isomerase"/>
    <property type="match status" value="1"/>
</dbReference>
<dbReference type="Gene3D" id="3.20.20.150">
    <property type="entry name" value="Divalent-metal-dependent TIM barrel enzymes"/>
    <property type="match status" value="1"/>
</dbReference>
<dbReference type="HAMAP" id="MF_00455">
    <property type="entry name" value="Xylose_isom_A"/>
    <property type="match status" value="1"/>
</dbReference>
<dbReference type="InterPro" id="IPR036237">
    <property type="entry name" value="Xyl_isomerase-like_sf"/>
</dbReference>
<dbReference type="InterPro" id="IPR013452">
    <property type="entry name" value="Xylose_isom_bac"/>
</dbReference>
<dbReference type="InterPro" id="IPR001998">
    <property type="entry name" value="Xylose_isomerase"/>
</dbReference>
<dbReference type="NCBIfam" id="NF003998">
    <property type="entry name" value="PRK05474.1"/>
    <property type="match status" value="1"/>
</dbReference>
<dbReference type="NCBIfam" id="TIGR02630">
    <property type="entry name" value="xylose_isom_A"/>
    <property type="match status" value="1"/>
</dbReference>
<dbReference type="PANTHER" id="PTHR48408">
    <property type="match status" value="1"/>
</dbReference>
<dbReference type="PANTHER" id="PTHR48408:SF1">
    <property type="entry name" value="XYLOSE ISOMERASE"/>
    <property type="match status" value="1"/>
</dbReference>
<dbReference type="PRINTS" id="PR00688">
    <property type="entry name" value="XYLOSISMRASE"/>
</dbReference>
<dbReference type="SUPFAM" id="SSF51658">
    <property type="entry name" value="Xylose isomerase-like"/>
    <property type="match status" value="1"/>
</dbReference>
<dbReference type="PROSITE" id="PS51415">
    <property type="entry name" value="XYLOSE_ISOMERASE"/>
    <property type="match status" value="1"/>
</dbReference>
<reference key="1">
    <citation type="journal article" date="2004" name="Proc. Natl. Acad. Sci. U.S.A.">
        <title>Genome sequence of the enterobacterial phytopathogen Erwinia carotovora subsp. atroseptica and characterization of virulence factors.</title>
        <authorList>
            <person name="Bell K.S."/>
            <person name="Sebaihia M."/>
            <person name="Pritchard L."/>
            <person name="Holden M.T.G."/>
            <person name="Hyman L.J."/>
            <person name="Holeva M.C."/>
            <person name="Thomson N.R."/>
            <person name="Bentley S.D."/>
            <person name="Churcher L.J.C."/>
            <person name="Mungall K."/>
            <person name="Atkin R."/>
            <person name="Bason N."/>
            <person name="Brooks K."/>
            <person name="Chillingworth T."/>
            <person name="Clark K."/>
            <person name="Doggett J."/>
            <person name="Fraser A."/>
            <person name="Hance Z."/>
            <person name="Hauser H."/>
            <person name="Jagels K."/>
            <person name="Moule S."/>
            <person name="Norbertczak H."/>
            <person name="Ormond D."/>
            <person name="Price C."/>
            <person name="Quail M.A."/>
            <person name="Sanders M."/>
            <person name="Walker D."/>
            <person name="Whitehead S."/>
            <person name="Salmond G.P.C."/>
            <person name="Birch P.R.J."/>
            <person name="Parkhill J."/>
            <person name="Toth I.K."/>
        </authorList>
    </citation>
    <scope>NUCLEOTIDE SEQUENCE [LARGE SCALE GENOMIC DNA]</scope>
    <source>
        <strain>SCRI 1043 / ATCC BAA-672</strain>
    </source>
</reference>
<comment type="catalytic activity">
    <reaction evidence="1">
        <text>alpha-D-xylose = alpha-D-xylulofuranose</text>
        <dbReference type="Rhea" id="RHEA:22816"/>
        <dbReference type="ChEBI" id="CHEBI:28518"/>
        <dbReference type="ChEBI" id="CHEBI:188998"/>
        <dbReference type="EC" id="5.3.1.5"/>
    </reaction>
</comment>
<comment type="cofactor">
    <cofactor evidence="1">
        <name>Mg(2+)</name>
        <dbReference type="ChEBI" id="CHEBI:18420"/>
    </cofactor>
    <text evidence="1">Binds 2 magnesium ions per subunit.</text>
</comment>
<comment type="subunit">
    <text evidence="1">Homotetramer.</text>
</comment>
<comment type="subcellular location">
    <subcellularLocation>
        <location evidence="1">Cytoplasm</location>
    </subcellularLocation>
</comment>
<comment type="similarity">
    <text evidence="1">Belongs to the xylose isomerase family.</text>
</comment>
<evidence type="ECO:0000255" key="1">
    <source>
        <dbReference type="HAMAP-Rule" id="MF_00455"/>
    </source>
</evidence>
<keyword id="KW-0119">Carbohydrate metabolism</keyword>
<keyword id="KW-0963">Cytoplasm</keyword>
<keyword id="KW-0413">Isomerase</keyword>
<keyword id="KW-0460">Magnesium</keyword>
<keyword id="KW-0479">Metal-binding</keyword>
<keyword id="KW-1185">Reference proteome</keyword>
<keyword id="KW-0859">Xylose metabolism</keyword>
<gene>
    <name evidence="1" type="primary">xylA</name>
    <name type="ordered locus">ECA0097</name>
</gene>
<sequence>MQAYFEQIEKVRYEGSQSSNPFAFRHYNPDQEILGKRMADHLRFAVAYWHTFCWNGSDMFGVGSFARPWQQSGDALELAKRKADIAFEFFQKLSVPYYCFHDVDVAPEGNSLKEYLHNIAVITDVLAEKQQDSGVKLLWGTANCFTNPRYGAGAATNPDPDVFAWAATQVFTAMNATKTLGGENYVLWGGREGYETLLNTDLRQEREQIGRFMQMVVEHKHKIGFQGTLLIEPKPQEPTKHQYDYDVATVYGFLKQFGLEKEIKVNVEANHATLAGHSFHHEIATAVALGVFGSVDANRGDPQLGWDTDQFPNSVEENTLIMYEILKAGGFTTGGLNFDAKVRRQSTDRYDLFHAHIGAMDTMALALKAAARMIEDDKLNQLVAKRYAGWNGELGQQILQGNASLESLAQYAESHQLAPQHQSGQQELLENLVNRHLFG</sequence>
<name>XYLA_PECAS</name>
<accession>Q6DB05</accession>
<protein>
    <recommendedName>
        <fullName evidence="1">Xylose isomerase</fullName>
        <ecNumber evidence="1">5.3.1.5</ecNumber>
    </recommendedName>
</protein>
<feature type="chain" id="PRO_0000236961" description="Xylose isomerase">
    <location>
        <begin position="1"/>
        <end position="439"/>
    </location>
</feature>
<feature type="active site" evidence="1">
    <location>
        <position position="101"/>
    </location>
</feature>
<feature type="active site" evidence="1">
    <location>
        <position position="104"/>
    </location>
</feature>
<feature type="binding site" evidence="1">
    <location>
        <position position="232"/>
    </location>
    <ligand>
        <name>Mg(2+)</name>
        <dbReference type="ChEBI" id="CHEBI:18420"/>
        <label>1</label>
    </ligand>
</feature>
<feature type="binding site" evidence="1">
    <location>
        <position position="268"/>
    </location>
    <ligand>
        <name>Mg(2+)</name>
        <dbReference type="ChEBI" id="CHEBI:18420"/>
        <label>1</label>
    </ligand>
</feature>
<feature type="binding site" evidence="1">
    <location>
        <position position="268"/>
    </location>
    <ligand>
        <name>Mg(2+)</name>
        <dbReference type="ChEBI" id="CHEBI:18420"/>
        <label>2</label>
    </ligand>
</feature>
<feature type="binding site" evidence="1">
    <location>
        <position position="271"/>
    </location>
    <ligand>
        <name>Mg(2+)</name>
        <dbReference type="ChEBI" id="CHEBI:18420"/>
        <label>2</label>
    </ligand>
</feature>
<feature type="binding site" evidence="1">
    <location>
        <position position="296"/>
    </location>
    <ligand>
        <name>Mg(2+)</name>
        <dbReference type="ChEBI" id="CHEBI:18420"/>
        <label>1</label>
    </ligand>
</feature>
<feature type="binding site" evidence="1">
    <location>
        <position position="307"/>
    </location>
    <ligand>
        <name>Mg(2+)</name>
        <dbReference type="ChEBI" id="CHEBI:18420"/>
        <label>2</label>
    </ligand>
</feature>
<feature type="binding site" evidence="1">
    <location>
        <position position="309"/>
    </location>
    <ligand>
        <name>Mg(2+)</name>
        <dbReference type="ChEBI" id="CHEBI:18420"/>
        <label>2</label>
    </ligand>
</feature>
<feature type="binding site" evidence="1">
    <location>
        <position position="339"/>
    </location>
    <ligand>
        <name>Mg(2+)</name>
        <dbReference type="ChEBI" id="CHEBI:18420"/>
        <label>1</label>
    </ligand>
</feature>
<organism>
    <name type="scientific">Pectobacterium atrosepticum (strain SCRI 1043 / ATCC BAA-672)</name>
    <name type="common">Erwinia carotovora subsp. atroseptica</name>
    <dbReference type="NCBI Taxonomy" id="218491"/>
    <lineage>
        <taxon>Bacteria</taxon>
        <taxon>Pseudomonadati</taxon>
        <taxon>Pseudomonadota</taxon>
        <taxon>Gammaproteobacteria</taxon>
        <taxon>Enterobacterales</taxon>
        <taxon>Pectobacteriaceae</taxon>
        <taxon>Pectobacterium</taxon>
    </lineage>
</organism>